<reference key="1">
    <citation type="submission" date="2006-06" db="EMBL/GenBank/DDBJ databases">
        <title>Complete sequence of chromosome of Mesorhizobium sp. BNC1.</title>
        <authorList>
            <consortium name="US DOE Joint Genome Institute"/>
            <person name="Copeland A."/>
            <person name="Lucas S."/>
            <person name="Lapidus A."/>
            <person name="Barry K."/>
            <person name="Detter J.C."/>
            <person name="Glavina del Rio T."/>
            <person name="Hammon N."/>
            <person name="Israni S."/>
            <person name="Dalin E."/>
            <person name="Tice H."/>
            <person name="Pitluck S."/>
            <person name="Chertkov O."/>
            <person name="Brettin T."/>
            <person name="Bruce D."/>
            <person name="Han C."/>
            <person name="Tapia R."/>
            <person name="Gilna P."/>
            <person name="Schmutz J."/>
            <person name="Larimer F."/>
            <person name="Land M."/>
            <person name="Hauser L."/>
            <person name="Kyrpides N."/>
            <person name="Mikhailova N."/>
            <person name="Richardson P."/>
        </authorList>
    </citation>
    <scope>NUCLEOTIDE SEQUENCE [LARGE SCALE GENOMIC DNA]</scope>
    <source>
        <strain>BNC1</strain>
    </source>
</reference>
<gene>
    <name evidence="1" type="primary">pncB</name>
    <name type="ordered locus">Meso_1739</name>
</gene>
<keyword id="KW-0436">Ligase</keyword>
<keyword id="KW-0597">Phosphoprotein</keyword>
<keyword id="KW-0662">Pyridine nucleotide biosynthesis</keyword>
<organism>
    <name type="scientific">Chelativorans sp. (strain BNC1)</name>
    <dbReference type="NCBI Taxonomy" id="266779"/>
    <lineage>
        <taxon>Bacteria</taxon>
        <taxon>Pseudomonadati</taxon>
        <taxon>Pseudomonadota</taxon>
        <taxon>Alphaproteobacteria</taxon>
        <taxon>Hyphomicrobiales</taxon>
        <taxon>Phyllobacteriaceae</taxon>
        <taxon>Chelativorans</taxon>
    </lineage>
</organism>
<comment type="function">
    <text evidence="1">Catalyzes the synthesis of beta-nicotinate D-ribonucleotide from nicotinate and 5-phospho-D-ribose 1-phosphate at the expense of ATP.</text>
</comment>
<comment type="catalytic activity">
    <reaction evidence="1">
        <text>nicotinate + 5-phospho-alpha-D-ribose 1-diphosphate + ATP + H2O = nicotinate beta-D-ribonucleotide + ADP + phosphate + diphosphate</text>
        <dbReference type="Rhea" id="RHEA:36163"/>
        <dbReference type="ChEBI" id="CHEBI:15377"/>
        <dbReference type="ChEBI" id="CHEBI:30616"/>
        <dbReference type="ChEBI" id="CHEBI:32544"/>
        <dbReference type="ChEBI" id="CHEBI:33019"/>
        <dbReference type="ChEBI" id="CHEBI:43474"/>
        <dbReference type="ChEBI" id="CHEBI:57502"/>
        <dbReference type="ChEBI" id="CHEBI:58017"/>
        <dbReference type="ChEBI" id="CHEBI:456216"/>
        <dbReference type="EC" id="6.3.4.21"/>
    </reaction>
</comment>
<comment type="pathway">
    <text evidence="1">Cofactor biosynthesis; NAD(+) biosynthesis; nicotinate D-ribonucleotide from nicotinate: step 1/1.</text>
</comment>
<comment type="PTM">
    <text evidence="1">Transiently phosphorylated on a His residue during the reaction cycle. Phosphorylation strongly increases the affinity for substrates and increases the rate of nicotinate D-ribonucleotide production. Dephosphorylation regenerates the low-affinity form of the enzyme, leading to product release.</text>
</comment>
<comment type="similarity">
    <text evidence="1">Belongs to the NAPRTase family.</text>
</comment>
<name>PNCB_CHESB</name>
<dbReference type="EC" id="6.3.4.21" evidence="1"/>
<dbReference type="EMBL" id="CP000390">
    <property type="protein sequence ID" value="ABG63133.1"/>
    <property type="molecule type" value="Genomic_DNA"/>
</dbReference>
<dbReference type="SMR" id="Q11HJ2"/>
<dbReference type="STRING" id="266779.Meso_1739"/>
<dbReference type="KEGG" id="mes:Meso_1739"/>
<dbReference type="eggNOG" id="COG1488">
    <property type="taxonomic scope" value="Bacteria"/>
</dbReference>
<dbReference type="HOGENOM" id="CLU_030991_1_0_5"/>
<dbReference type="OrthoDB" id="9771406at2"/>
<dbReference type="UniPathway" id="UPA00253">
    <property type="reaction ID" value="UER00457"/>
</dbReference>
<dbReference type="GO" id="GO:0005829">
    <property type="term" value="C:cytosol"/>
    <property type="evidence" value="ECO:0007669"/>
    <property type="project" value="TreeGrafter"/>
</dbReference>
<dbReference type="GO" id="GO:0004516">
    <property type="term" value="F:nicotinate phosphoribosyltransferase activity"/>
    <property type="evidence" value="ECO:0007669"/>
    <property type="project" value="UniProtKB-UniRule"/>
</dbReference>
<dbReference type="GO" id="GO:0034355">
    <property type="term" value="P:NAD biosynthetic process via the salvage pathway"/>
    <property type="evidence" value="ECO:0007669"/>
    <property type="project" value="TreeGrafter"/>
</dbReference>
<dbReference type="Gene3D" id="3.20.140.10">
    <property type="entry name" value="nicotinate phosphoribosyltransferase"/>
    <property type="match status" value="1"/>
</dbReference>
<dbReference type="HAMAP" id="MF_00570">
    <property type="entry name" value="NAPRTase"/>
    <property type="match status" value="1"/>
</dbReference>
<dbReference type="InterPro" id="IPR041525">
    <property type="entry name" value="N/Namide_PRibTrfase"/>
</dbReference>
<dbReference type="InterPro" id="IPR040727">
    <property type="entry name" value="NAPRTase_N"/>
</dbReference>
<dbReference type="InterPro" id="IPR006406">
    <property type="entry name" value="Nic_PRibTrfase"/>
</dbReference>
<dbReference type="InterPro" id="IPR007229">
    <property type="entry name" value="Nic_PRibTrfase-Fam"/>
</dbReference>
<dbReference type="InterPro" id="IPR036068">
    <property type="entry name" value="Nicotinate_pribotase-like_C"/>
</dbReference>
<dbReference type="NCBIfam" id="TIGR01514">
    <property type="entry name" value="NAPRTase"/>
    <property type="match status" value="1"/>
</dbReference>
<dbReference type="NCBIfam" id="NF003704">
    <property type="entry name" value="PRK05321.1"/>
    <property type="match status" value="1"/>
</dbReference>
<dbReference type="PANTHER" id="PTHR11098">
    <property type="entry name" value="NICOTINATE PHOSPHORIBOSYLTRANSFERASE"/>
    <property type="match status" value="1"/>
</dbReference>
<dbReference type="PANTHER" id="PTHR11098:SF1">
    <property type="entry name" value="NICOTINATE PHOSPHORIBOSYLTRANSFERASE"/>
    <property type="match status" value="1"/>
</dbReference>
<dbReference type="Pfam" id="PF04095">
    <property type="entry name" value="NAPRTase"/>
    <property type="match status" value="1"/>
</dbReference>
<dbReference type="Pfam" id="PF17767">
    <property type="entry name" value="NAPRTase_N"/>
    <property type="match status" value="1"/>
</dbReference>
<dbReference type="PIRSF" id="PIRSF000484">
    <property type="entry name" value="NAPRT"/>
    <property type="match status" value="1"/>
</dbReference>
<dbReference type="SUPFAM" id="SSF51690">
    <property type="entry name" value="Nicotinate/Quinolinate PRTase C-terminal domain-like"/>
    <property type="match status" value="1"/>
</dbReference>
<dbReference type="SUPFAM" id="SSF54675">
    <property type="entry name" value="Nicotinate/Quinolinate PRTase N-terminal domain-like"/>
    <property type="match status" value="1"/>
</dbReference>
<sequence length="434" mass="50295">MTVTDIARRVYNHTWKLDPICRSLLDTDFYKLLMLQMIWGLYQDVDATFSLTNRNHRVRLADEIDEAELRAQLDHARTIRFSKKEMIWLAGNSFYGRKQIFSPEFLAWLADFQLPEYELRRRDGQFELHFYGRWMETTMWEIPALAIINELRSRAAMRTLGRFALDVLYARAKAKVWEKVERLKKYPDIRISDFGTRRRHSFLWQRWCVEALKEGIGESFTGTSNVLLAMDTDLEALGTNAHELPMVLAALSSSDEELKASPYQVLKDWQSYYGGNLLIVLPDTFGTESFLEDAPGWVADWTGFRPDSAPPIEGGERIISWWEQHGRDPREKLLIFSDALDVDTIEQTYRHFKGRSRLSFGWGTNLTNDFDGCAPEKIDRLKAISLVCKVSSANGRPAVKLSDNPEKATGRPEEIQRYLRVFGSRNRVHQPVEV</sequence>
<accession>Q11HJ2</accession>
<protein>
    <recommendedName>
        <fullName evidence="1">Nicotinate phosphoribosyltransferase</fullName>
        <shortName evidence="1">NAPRTase</shortName>
        <ecNumber evidence="1">6.3.4.21</ecNumber>
    </recommendedName>
</protein>
<proteinExistence type="inferred from homology"/>
<feature type="chain" id="PRO_1000146843" description="Nicotinate phosphoribosyltransferase">
    <location>
        <begin position="1"/>
        <end position="434"/>
    </location>
</feature>
<feature type="modified residue" description="Phosphohistidine; by autocatalysis" evidence="1">
    <location>
        <position position="242"/>
    </location>
</feature>
<evidence type="ECO:0000255" key="1">
    <source>
        <dbReference type="HAMAP-Rule" id="MF_00570"/>
    </source>
</evidence>